<sequence>MSLLHTFKETLKPCGSFPSSSSLRVSSTQELEPSRKPPKSSLSQQLLRLDDSYFLPSKHESKISKTQVEDFDHNEDDHKRNIKFDEEEVDEDDERSIEFGRPGLSRAEFDYSGPYEPLMLSSIGEIPIIHVPASINCRLLEHQREGVKFMYNLYKNNHGGILGDDMGLGKTIQTIAFLAAVYGKDGDAGESCLLESDKGPVLIICPSSIIHNWESEFSRWASFFKVSVYHGSNRDMILEKLKARGVEVLVTSFDTFRIQGPVLSGINWEIVIADEAHRLKNEKSKLYEACLEIKTKKRIGLTGTVMQNKISELFNLFEWVAPGSLGTREHFRDFYDEPLKLGQRATAPERFVQIADKRKQHLGSLLRKYMLRRTKEETIGHLMMGKEDNVVFCQMSQLQRRVYQRMIQLPEIQCLVNKDNPCACGSPLKQSECCRRIVPDGTIWSYLHRDNHDGCDSCPFCLVLPCLMKLQQISNHLELIKPNPKDEPEKQKKDAEFVSTVFGTDIDLLGGISASKSFMDLSDVKHCGKMRALEKLMASWISKGDKILLFSYSVRMLDILEKFLIRKGYSFARLDGSTPTNLRQSLVDDFNASPSKQVFLISTKAGGLGLNLVSANRVVIFDPNWNPSHDLQAQDRSFRYGQKRHVVVFRLLSAGSLEELVYTRQVYKQQLSNIAVAGKMETRYFEGVQDCKEFQGELFGISNLFRDLSDKLFTSDIVELHRDSNIDENKKRSLLETGVSEDEKEEEVMCSYKPEMEKPILKDLGIVYAHRNEDIINIGETTTSTSQRLNGDGNSADRKKKKRKGCSEEEDMSSSNREQKREKYKMLAEFKGMEILEFSRWVLSASPFDREKLLQDFLERVK</sequence>
<keyword id="KW-0067">ATP-binding</keyword>
<keyword id="KW-0175">Coiled coil</keyword>
<keyword id="KW-0227">DNA damage</keyword>
<keyword id="KW-0234">DNA repair</keyword>
<keyword id="KW-0238">DNA-binding</keyword>
<keyword id="KW-0347">Helicase</keyword>
<keyword id="KW-0378">Hydrolase</keyword>
<keyword id="KW-0547">Nucleotide-binding</keyword>
<keyword id="KW-1185">Reference proteome</keyword>
<organism evidence="11">
    <name type="scientific">Arabidopsis thaliana</name>
    <name type="common">Mouse-ear cress</name>
    <dbReference type="NCBI Taxonomy" id="3702"/>
    <lineage>
        <taxon>Eukaryota</taxon>
        <taxon>Viridiplantae</taxon>
        <taxon>Streptophyta</taxon>
        <taxon>Embryophyta</taxon>
        <taxon>Tracheophyta</taxon>
        <taxon>Spermatophyta</taxon>
        <taxon>Magnoliopsida</taxon>
        <taxon>eudicotyledons</taxon>
        <taxon>Gunneridae</taxon>
        <taxon>Pentapetalae</taxon>
        <taxon>rosids</taxon>
        <taxon>malvids</taxon>
        <taxon>Brassicales</taxon>
        <taxon>Brassicaceae</taxon>
        <taxon>Camelineae</taxon>
        <taxon>Arabidopsis</taxon>
    </lineage>
</organism>
<feature type="chain" id="PRO_0000430855" description="Switch 2">
    <location>
        <begin position="1"/>
        <end position="862"/>
    </location>
</feature>
<feature type="domain" description="Helicase ATP-binding" evidence="3">
    <location>
        <begin position="151"/>
        <end position="323"/>
    </location>
</feature>
<feature type="domain" description="Helicase C-terminal" evidence="4">
    <location>
        <begin position="532"/>
        <end position="685"/>
    </location>
</feature>
<feature type="region of interest" description="Disordered" evidence="5">
    <location>
        <begin position="13"/>
        <end position="43"/>
    </location>
</feature>
<feature type="region of interest" description="Disordered" evidence="5">
    <location>
        <begin position="58"/>
        <end position="95"/>
    </location>
</feature>
<feature type="region of interest" description="Disordered" evidence="5">
    <location>
        <begin position="782"/>
        <end position="821"/>
    </location>
</feature>
<feature type="coiled-coil region" evidence="2">
    <location>
        <begin position="274"/>
        <end position="294"/>
    </location>
</feature>
<feature type="short sequence motif" description="DEAH box" evidence="3">
    <location>
        <begin position="274"/>
        <end position="277"/>
    </location>
</feature>
<feature type="compositionally biased region" description="Low complexity" evidence="5">
    <location>
        <begin position="16"/>
        <end position="27"/>
    </location>
</feature>
<feature type="compositionally biased region" description="Basic and acidic residues" evidence="5">
    <location>
        <begin position="58"/>
        <end position="84"/>
    </location>
</feature>
<feature type="compositionally biased region" description="Acidic residues" evidence="5">
    <location>
        <begin position="85"/>
        <end position="95"/>
    </location>
</feature>
<feature type="compositionally biased region" description="Polar residues" evidence="5">
    <location>
        <begin position="782"/>
        <end position="793"/>
    </location>
</feature>
<feature type="binding site" evidence="3">
    <location>
        <begin position="164"/>
        <end position="171"/>
    </location>
    <ligand>
        <name>ATP</name>
        <dbReference type="ChEBI" id="CHEBI:30616"/>
    </ligand>
</feature>
<evidence type="ECO:0000250" key="1">
    <source>
        <dbReference type="UniProtKB" id="Q5T890"/>
    </source>
</evidence>
<evidence type="ECO:0000255" key="2"/>
<evidence type="ECO:0000255" key="3">
    <source>
        <dbReference type="PROSITE-ProRule" id="PRU00541"/>
    </source>
</evidence>
<evidence type="ECO:0000255" key="4">
    <source>
        <dbReference type="PROSITE-ProRule" id="PRU00542"/>
    </source>
</evidence>
<evidence type="ECO:0000256" key="5">
    <source>
        <dbReference type="SAM" id="MobiDB-lite"/>
    </source>
</evidence>
<evidence type="ECO:0000303" key="6">
    <source>
    </source>
</evidence>
<evidence type="ECO:0000305" key="7"/>
<evidence type="ECO:0000312" key="8">
    <source>
        <dbReference type="Araport" id="AT1G03750"/>
    </source>
</evidence>
<evidence type="ECO:0000312" key="9">
    <source>
        <dbReference type="EMBL" id="AAD10693.1"/>
    </source>
</evidence>
<evidence type="ECO:0000312" key="10">
    <source>
        <dbReference type="EMBL" id="AEE27606.1"/>
    </source>
</evidence>
<evidence type="ECO:0000312" key="11">
    <source>
        <dbReference type="Proteomes" id="UP000006548"/>
    </source>
</evidence>
<accession>F4I2H2</accession>
<accession>Q9ZW97</accession>
<protein>
    <recommendedName>
        <fullName evidence="10">Switch 2</fullName>
        <ecNumber>3.6.4.-</ecNumber>
    </recommendedName>
    <alternativeName>
        <fullName evidence="6">Protein CHROMATIN REMODELING 9</fullName>
        <shortName>AtCHR9</shortName>
    </alternativeName>
</protein>
<name>CHR9_ARATH</name>
<reference key="1">
    <citation type="journal article" date="2000" name="Nature">
        <title>Sequence and analysis of chromosome 1 of the plant Arabidopsis thaliana.</title>
        <authorList>
            <person name="Theologis A."/>
            <person name="Ecker J.R."/>
            <person name="Palm C.J."/>
            <person name="Federspiel N.A."/>
            <person name="Kaul S."/>
            <person name="White O."/>
            <person name="Alonso J."/>
            <person name="Altafi H."/>
            <person name="Araujo R."/>
            <person name="Bowman C.L."/>
            <person name="Brooks S.Y."/>
            <person name="Buehler E."/>
            <person name="Chan A."/>
            <person name="Chao Q."/>
            <person name="Chen H."/>
            <person name="Cheuk R.F."/>
            <person name="Chin C.W."/>
            <person name="Chung M.K."/>
            <person name="Conn L."/>
            <person name="Conway A.B."/>
            <person name="Conway A.R."/>
            <person name="Creasy T.H."/>
            <person name="Dewar K."/>
            <person name="Dunn P."/>
            <person name="Etgu P."/>
            <person name="Feldblyum T.V."/>
            <person name="Feng J.-D."/>
            <person name="Fong B."/>
            <person name="Fujii C.Y."/>
            <person name="Gill J.E."/>
            <person name="Goldsmith A.D."/>
            <person name="Haas B."/>
            <person name="Hansen N.F."/>
            <person name="Hughes B."/>
            <person name="Huizar L."/>
            <person name="Hunter J.L."/>
            <person name="Jenkins J."/>
            <person name="Johnson-Hopson C."/>
            <person name="Khan S."/>
            <person name="Khaykin E."/>
            <person name="Kim C.J."/>
            <person name="Koo H.L."/>
            <person name="Kremenetskaia I."/>
            <person name="Kurtz D.B."/>
            <person name="Kwan A."/>
            <person name="Lam B."/>
            <person name="Langin-Hooper S."/>
            <person name="Lee A."/>
            <person name="Lee J.M."/>
            <person name="Lenz C.A."/>
            <person name="Li J.H."/>
            <person name="Li Y.-P."/>
            <person name="Lin X."/>
            <person name="Liu S.X."/>
            <person name="Liu Z.A."/>
            <person name="Luros J.S."/>
            <person name="Maiti R."/>
            <person name="Marziali A."/>
            <person name="Militscher J."/>
            <person name="Miranda M."/>
            <person name="Nguyen M."/>
            <person name="Nierman W.C."/>
            <person name="Osborne B.I."/>
            <person name="Pai G."/>
            <person name="Peterson J."/>
            <person name="Pham P.K."/>
            <person name="Rizzo M."/>
            <person name="Rooney T."/>
            <person name="Rowley D."/>
            <person name="Sakano H."/>
            <person name="Salzberg S.L."/>
            <person name="Schwartz J.R."/>
            <person name="Shinn P."/>
            <person name="Southwick A.M."/>
            <person name="Sun H."/>
            <person name="Tallon L.J."/>
            <person name="Tambunga G."/>
            <person name="Toriumi M.J."/>
            <person name="Town C.D."/>
            <person name="Utterback T."/>
            <person name="Van Aken S."/>
            <person name="Vaysberg M."/>
            <person name="Vysotskaia V.S."/>
            <person name="Walker M."/>
            <person name="Wu D."/>
            <person name="Yu G."/>
            <person name="Fraser C.M."/>
            <person name="Venter J.C."/>
            <person name="Davis R.W."/>
        </authorList>
    </citation>
    <scope>NUCLEOTIDE SEQUENCE [LARGE SCALE GENOMIC DNA]</scope>
    <source>
        <strain>cv. Columbia</strain>
    </source>
</reference>
<reference key="2">
    <citation type="journal article" date="2017" name="Plant J.">
        <title>Araport11: a complete reannotation of the Arabidopsis thaliana reference genome.</title>
        <authorList>
            <person name="Cheng C.Y."/>
            <person name="Krishnakumar V."/>
            <person name="Chan A.P."/>
            <person name="Thibaud-Nissen F."/>
            <person name="Schobel S."/>
            <person name="Town C.D."/>
        </authorList>
    </citation>
    <scope>GENOME REANNOTATION</scope>
    <source>
        <strain>cv. Columbia</strain>
    </source>
</reference>
<reference key="3">
    <citation type="journal article" date="2006" name="Genetics">
        <title>Involvement of the Arabidopsis SWI2/SNF2 chromatin remodeling gene family in DNA damage response and recombination.</title>
        <authorList>
            <person name="Shaked H."/>
            <person name="Avivi-Ragolsky N."/>
            <person name="Levy A.A."/>
        </authorList>
    </citation>
    <scope>GENE FAMILY</scope>
    <scope>NOMENCLATURE</scope>
</reference>
<reference key="4">
    <citation type="journal article" date="2013" name="PLoS ONE">
        <title>Genome-wide comparative in silico analysis of the RNA helicase gene family in Zea mays and Glycine max: a comparison with Arabidopsis and Oryza sativa.</title>
        <authorList>
            <person name="Xu R."/>
            <person name="Zhang S."/>
            <person name="Huang J."/>
            <person name="Zheng C."/>
        </authorList>
    </citation>
    <scope>GENE FAMILY</scope>
</reference>
<proteinExistence type="inferred from homology"/>
<dbReference type="EC" id="3.6.4.-"/>
<dbReference type="EMBL" id="AC003027">
    <property type="protein sequence ID" value="AAD10693.1"/>
    <property type="status" value="ALT_SEQ"/>
    <property type="molecule type" value="Genomic_DNA"/>
</dbReference>
<dbReference type="EMBL" id="CP002684">
    <property type="protein sequence ID" value="AEE27606.1"/>
    <property type="molecule type" value="Genomic_DNA"/>
</dbReference>
<dbReference type="PIR" id="H86167">
    <property type="entry name" value="H86167"/>
</dbReference>
<dbReference type="RefSeq" id="NP_171871.2">
    <property type="nucleotide sequence ID" value="NM_100254.4"/>
</dbReference>
<dbReference type="SMR" id="F4I2H2"/>
<dbReference type="BioGRID" id="24652">
    <property type="interactions" value="2"/>
</dbReference>
<dbReference type="FunCoup" id="F4I2H2">
    <property type="interactions" value="651"/>
</dbReference>
<dbReference type="IntAct" id="F4I2H2">
    <property type="interactions" value="2"/>
</dbReference>
<dbReference type="STRING" id="3702.F4I2H2"/>
<dbReference type="iPTMnet" id="F4I2H2"/>
<dbReference type="PaxDb" id="3702-AT1G03750.1"/>
<dbReference type="ProteomicsDB" id="246787"/>
<dbReference type="EnsemblPlants" id="AT1G03750.1">
    <property type="protein sequence ID" value="AT1G03750.1"/>
    <property type="gene ID" value="AT1G03750"/>
</dbReference>
<dbReference type="GeneID" id="839417"/>
<dbReference type="Gramene" id="AT1G03750.1">
    <property type="protein sequence ID" value="AT1G03750.1"/>
    <property type="gene ID" value="AT1G03750"/>
</dbReference>
<dbReference type="KEGG" id="ath:AT1G03750"/>
<dbReference type="Araport" id="AT1G03750"/>
<dbReference type="TAIR" id="AT1G03750">
    <property type="gene designation" value="SWI2"/>
</dbReference>
<dbReference type="eggNOG" id="KOG0387">
    <property type="taxonomic scope" value="Eukaryota"/>
</dbReference>
<dbReference type="HOGENOM" id="CLU_000315_23_1_1"/>
<dbReference type="InParanoid" id="F4I2H2"/>
<dbReference type="OMA" id="DGVIWPY"/>
<dbReference type="PRO" id="PR:F4I2H2"/>
<dbReference type="Proteomes" id="UP000006548">
    <property type="component" value="Chromosome 1"/>
</dbReference>
<dbReference type="ExpressionAtlas" id="F4I2H2">
    <property type="expression patterns" value="baseline and differential"/>
</dbReference>
<dbReference type="GO" id="GO:0005524">
    <property type="term" value="F:ATP binding"/>
    <property type="evidence" value="ECO:0007669"/>
    <property type="project" value="UniProtKB-KW"/>
</dbReference>
<dbReference type="GO" id="GO:0003677">
    <property type="term" value="F:DNA binding"/>
    <property type="evidence" value="ECO:0007669"/>
    <property type="project" value="UniProtKB-KW"/>
</dbReference>
<dbReference type="GO" id="GO:0004386">
    <property type="term" value="F:helicase activity"/>
    <property type="evidence" value="ECO:0007669"/>
    <property type="project" value="UniProtKB-KW"/>
</dbReference>
<dbReference type="GO" id="GO:0016787">
    <property type="term" value="F:hydrolase activity"/>
    <property type="evidence" value="ECO:0007669"/>
    <property type="project" value="UniProtKB-KW"/>
</dbReference>
<dbReference type="GO" id="GO:0006281">
    <property type="term" value="P:DNA repair"/>
    <property type="evidence" value="ECO:0007669"/>
    <property type="project" value="UniProtKB-KW"/>
</dbReference>
<dbReference type="CDD" id="cd18005">
    <property type="entry name" value="DEXHc_ERCC6L2"/>
    <property type="match status" value="1"/>
</dbReference>
<dbReference type="CDD" id="cd18793">
    <property type="entry name" value="SF2_C_SNF"/>
    <property type="match status" value="1"/>
</dbReference>
<dbReference type="FunFam" id="3.40.50.10810:FF:000040">
    <property type="entry name" value="Switch 2"/>
    <property type="match status" value="1"/>
</dbReference>
<dbReference type="Gene3D" id="3.40.50.300">
    <property type="entry name" value="P-loop containing nucleotide triphosphate hydrolases"/>
    <property type="match status" value="1"/>
</dbReference>
<dbReference type="Gene3D" id="3.40.50.10810">
    <property type="entry name" value="Tandem AAA-ATPase domain"/>
    <property type="match status" value="1"/>
</dbReference>
<dbReference type="InterPro" id="IPR014001">
    <property type="entry name" value="Helicase_ATP-bd"/>
</dbReference>
<dbReference type="InterPro" id="IPR001650">
    <property type="entry name" value="Helicase_C-like"/>
</dbReference>
<dbReference type="InterPro" id="IPR027417">
    <property type="entry name" value="P-loop_NTPase"/>
</dbReference>
<dbReference type="InterPro" id="IPR038718">
    <property type="entry name" value="SNF2-like_sf"/>
</dbReference>
<dbReference type="InterPro" id="IPR049730">
    <property type="entry name" value="SNF2/RAD54-like_C"/>
</dbReference>
<dbReference type="InterPro" id="IPR000330">
    <property type="entry name" value="SNF2_N"/>
</dbReference>
<dbReference type="InterPro" id="IPR050496">
    <property type="entry name" value="SNF2_RAD54_helicase_repair"/>
</dbReference>
<dbReference type="PANTHER" id="PTHR45629:SF7">
    <property type="entry name" value="DNA EXCISION REPAIR PROTEIN ERCC-6-RELATED"/>
    <property type="match status" value="1"/>
</dbReference>
<dbReference type="PANTHER" id="PTHR45629">
    <property type="entry name" value="SNF2/RAD54 FAMILY MEMBER"/>
    <property type="match status" value="1"/>
</dbReference>
<dbReference type="Pfam" id="PF00271">
    <property type="entry name" value="Helicase_C"/>
    <property type="match status" value="1"/>
</dbReference>
<dbReference type="Pfam" id="PF00176">
    <property type="entry name" value="SNF2-rel_dom"/>
    <property type="match status" value="1"/>
</dbReference>
<dbReference type="SMART" id="SM00487">
    <property type="entry name" value="DEXDc"/>
    <property type="match status" value="1"/>
</dbReference>
<dbReference type="SMART" id="SM00490">
    <property type="entry name" value="HELICc"/>
    <property type="match status" value="1"/>
</dbReference>
<dbReference type="SUPFAM" id="SSF52540">
    <property type="entry name" value="P-loop containing nucleoside triphosphate hydrolases"/>
    <property type="match status" value="2"/>
</dbReference>
<dbReference type="PROSITE" id="PS51192">
    <property type="entry name" value="HELICASE_ATP_BIND_1"/>
    <property type="match status" value="1"/>
</dbReference>
<dbReference type="PROSITE" id="PS51194">
    <property type="entry name" value="HELICASE_CTER"/>
    <property type="match status" value="1"/>
</dbReference>
<comment type="function">
    <text evidence="1 6">May be involved in early DNA damage response (By similarity). Probable chromatin remodeling factor.</text>
</comment>
<comment type="similarity">
    <text evidence="7">Belongs to the SNF2/RAD54 helicase family.</text>
</comment>
<comment type="sequence caution">
    <conflict type="erroneous gene model prediction">
        <sequence resource="EMBL-CDS" id="AAD10693"/>
    </conflict>
</comment>
<gene>
    <name evidence="10" type="primary">SWI2</name>
    <name evidence="6" type="synonym">CHR9</name>
    <name evidence="8" type="ordered locus">At1g03750</name>
    <name evidence="9" type="ORF">F11M21.32</name>
</gene>